<comment type="function">
    <text evidence="2">Essential subunit of both the farnesyltransferase and the geranylgeranyltransferase complex. Contributes to the transfer of a farnesyl or geranylgeranyl moiety from farnesyl or geranylgeranyl diphosphate to a cysteine at the fourth position from the C-terminus of several proteins having the C-terminal sequence Cys-aliphatic-aliphatic-X.</text>
</comment>
<comment type="catalytic activity">
    <reaction evidence="2">
        <text>L-cysteinyl-[protein] + (2E,6E)-farnesyl diphosphate = S-(2E,6E)-farnesyl-L-cysteinyl-[protein] + diphosphate</text>
        <dbReference type="Rhea" id="RHEA:13345"/>
        <dbReference type="Rhea" id="RHEA-COMP:10131"/>
        <dbReference type="Rhea" id="RHEA-COMP:11535"/>
        <dbReference type="ChEBI" id="CHEBI:29950"/>
        <dbReference type="ChEBI" id="CHEBI:33019"/>
        <dbReference type="ChEBI" id="CHEBI:86019"/>
        <dbReference type="ChEBI" id="CHEBI:175763"/>
        <dbReference type="EC" id="2.5.1.58"/>
    </reaction>
</comment>
<comment type="catalytic activity">
    <reaction evidence="2">
        <text>geranylgeranyl diphosphate + L-cysteinyl-[protein] = S-geranylgeranyl-L-cysteinyl-[protein] + diphosphate</text>
        <dbReference type="Rhea" id="RHEA:21240"/>
        <dbReference type="Rhea" id="RHEA-COMP:10131"/>
        <dbReference type="Rhea" id="RHEA-COMP:11537"/>
        <dbReference type="ChEBI" id="CHEBI:29950"/>
        <dbReference type="ChEBI" id="CHEBI:33019"/>
        <dbReference type="ChEBI" id="CHEBI:57533"/>
        <dbReference type="ChEBI" id="CHEBI:86021"/>
        <dbReference type="EC" id="2.5.1.59"/>
    </reaction>
</comment>
<comment type="cofactor">
    <cofactor evidence="1">
        <name>Mg(2+)</name>
        <dbReference type="ChEBI" id="CHEBI:18420"/>
    </cofactor>
</comment>
<comment type="subunit">
    <text evidence="2">Heterodimer of FTA and FTB (farnesyltransferase). Heterodimer of an alpha and a beta subunit.</text>
</comment>
<comment type="similarity">
    <text evidence="3">Belongs to the protein prenyltransferase subunit alpha family.</text>
</comment>
<accession>O24304</accession>
<feature type="chain" id="PRO_0000119751" description="Protein farnesyltransferase/geranylgeranyltransferase type-1 subunit alpha">
    <location>
        <begin position="1"/>
        <end position="333"/>
    </location>
</feature>
<feature type="repeat" description="PFTA 1">
    <location>
        <begin position="61"/>
        <end position="95"/>
    </location>
</feature>
<feature type="repeat" description="PFTA 2">
    <location>
        <begin position="96"/>
        <end position="130"/>
    </location>
</feature>
<feature type="repeat" description="PFTA 3">
    <location>
        <begin position="132"/>
        <end position="166"/>
    </location>
</feature>
<feature type="repeat" description="PFTA 4">
    <location>
        <begin position="167"/>
        <end position="200"/>
    </location>
</feature>
<feature type="repeat" description="PFTA 5">
    <location>
        <begin position="207"/>
        <end position="241"/>
    </location>
</feature>
<organism>
    <name type="scientific">Pisum sativum</name>
    <name type="common">Garden pea</name>
    <name type="synonym">Lathyrus oleraceus</name>
    <dbReference type="NCBI Taxonomy" id="3888"/>
    <lineage>
        <taxon>Eukaryota</taxon>
        <taxon>Viridiplantae</taxon>
        <taxon>Streptophyta</taxon>
        <taxon>Embryophyta</taxon>
        <taxon>Tracheophyta</taxon>
        <taxon>Spermatophyta</taxon>
        <taxon>Magnoliopsida</taxon>
        <taxon>eudicotyledons</taxon>
        <taxon>Gunneridae</taxon>
        <taxon>Pentapetalae</taxon>
        <taxon>rosids</taxon>
        <taxon>fabids</taxon>
        <taxon>Fabales</taxon>
        <taxon>Fabaceae</taxon>
        <taxon>Papilionoideae</taxon>
        <taxon>50 kb inversion clade</taxon>
        <taxon>NPAAA clade</taxon>
        <taxon>Hologalegina</taxon>
        <taxon>IRL clade</taxon>
        <taxon>Fabeae</taxon>
        <taxon>Pisum</taxon>
    </lineage>
</organism>
<dbReference type="EC" id="2.5.1.58"/>
<dbReference type="EC" id="2.5.1.59"/>
<dbReference type="EMBL" id="U63298">
    <property type="protein sequence ID" value="AAB62580.1"/>
    <property type="molecule type" value="mRNA"/>
</dbReference>
<dbReference type="PIR" id="T06516">
    <property type="entry name" value="T06516"/>
</dbReference>
<dbReference type="SMR" id="O24304"/>
<dbReference type="GO" id="GO:0005953">
    <property type="term" value="C:CAAX-protein geranylgeranyltransferase complex"/>
    <property type="evidence" value="ECO:0000250"/>
    <property type="project" value="UniProtKB"/>
</dbReference>
<dbReference type="GO" id="GO:0005965">
    <property type="term" value="C:protein farnesyltransferase complex"/>
    <property type="evidence" value="ECO:0000250"/>
    <property type="project" value="UniProtKB"/>
</dbReference>
<dbReference type="GO" id="GO:0004662">
    <property type="term" value="F:CAAX-protein geranylgeranyltransferase activity"/>
    <property type="evidence" value="ECO:0007669"/>
    <property type="project" value="UniProtKB-EC"/>
</dbReference>
<dbReference type="GO" id="GO:0004660">
    <property type="term" value="F:protein farnesyltransferase activity"/>
    <property type="evidence" value="ECO:0000250"/>
    <property type="project" value="UniProtKB"/>
</dbReference>
<dbReference type="GO" id="GO:0004661">
    <property type="term" value="F:protein geranylgeranyltransferase activity"/>
    <property type="evidence" value="ECO:0000250"/>
    <property type="project" value="UniProtKB"/>
</dbReference>
<dbReference type="GO" id="GO:0018343">
    <property type="term" value="P:protein farnesylation"/>
    <property type="evidence" value="ECO:0000250"/>
    <property type="project" value="UniProtKB"/>
</dbReference>
<dbReference type="GO" id="GO:0018344">
    <property type="term" value="P:protein geranylgeranylation"/>
    <property type="evidence" value="ECO:0000250"/>
    <property type="project" value="UniProtKB"/>
</dbReference>
<dbReference type="FunFam" id="1.25.40.120:FF:000004">
    <property type="entry name" value="Protein farnesyltransferase/geranylgeranyltransferase type-1 subunit alpha"/>
    <property type="match status" value="1"/>
</dbReference>
<dbReference type="Gene3D" id="1.25.40.120">
    <property type="entry name" value="Protein prenylyltransferase"/>
    <property type="match status" value="1"/>
</dbReference>
<dbReference type="InterPro" id="IPR002088">
    <property type="entry name" value="Prenyl_trans_a"/>
</dbReference>
<dbReference type="PANTHER" id="PTHR11129">
    <property type="entry name" value="PROTEIN FARNESYLTRANSFERASE ALPHA SUBUNIT/RAB GERANYLGERANYL TRANSFERASE ALPHA SUBUNIT"/>
    <property type="match status" value="1"/>
</dbReference>
<dbReference type="PANTHER" id="PTHR11129:SF1">
    <property type="entry name" value="PROTEIN FARNESYLTRANSFERASE_GERANYLGERANYLTRANSFERASE TYPE-1 SUBUNIT ALPHA"/>
    <property type="match status" value="1"/>
</dbReference>
<dbReference type="Pfam" id="PF01239">
    <property type="entry name" value="PPTA"/>
    <property type="match status" value="4"/>
</dbReference>
<dbReference type="SUPFAM" id="SSF48439">
    <property type="entry name" value="Protein prenylyltransferase"/>
    <property type="match status" value="1"/>
</dbReference>
<dbReference type="PROSITE" id="PS51147">
    <property type="entry name" value="PFTA"/>
    <property type="match status" value="5"/>
</dbReference>
<keyword id="KW-0460">Magnesium</keyword>
<keyword id="KW-0637">Prenyltransferase</keyword>
<keyword id="KW-0677">Repeat</keyword>
<keyword id="KW-0808">Transferase</keyword>
<sequence>MAGNIEVEEDDRVPLRLRPEWSDVTPIPQDDGPSPVVPINYSEEFSEVMDYFRAVYFAKELSSRALALTAEAIGLNAGNYTVWHFRRLLLESLKVDLHVEREFVERVASGNSKNYQIWHHRRWVAEKLGPEARNSELEFTKKILSVDAKHYHAWSHRQWVLQNLGGWEDELSYCSELLAEDIFNNSAWNQRYFVITRSPVLGGLKAMRESEVLFTVEAIISYPENESSWRYLRGLFKDESTLYVNDAQVSSLCLKILKTKSNYLFALSTLLDLSASVIQPNEDFRDAIEALRLQILIKQDSDIAITICSILEQVDPIRVNYWVWRKSRLPQAA</sequence>
<reference key="1">
    <citation type="journal article" date="1996" name="Plant Cell">
        <title>Protein farnesyltransferase in plants: molecular characterization and involvement in cell cycle control.</title>
        <authorList>
            <person name="Qian D."/>
            <person name="Zhou D."/>
            <person name="Ju R."/>
            <person name="Cramer C.L."/>
            <person name="Yang Z."/>
        </authorList>
    </citation>
    <scope>NUCLEOTIDE SEQUENCE [MRNA]</scope>
    <scope>FUNCTION</scope>
    <scope>CATALYTIC ACTIVITY</scope>
    <scope>SUBUNIT</scope>
    <source>
        <strain>cv. Alaska</strain>
        <tissue>Root tip</tissue>
    </source>
</reference>
<protein>
    <recommendedName>
        <fullName>Protein farnesyltransferase/geranylgeranyltransferase type-1 subunit alpha</fullName>
        <ecNumber>2.5.1.58</ecNumber>
        <ecNumber>2.5.1.59</ecNumber>
    </recommendedName>
    <alternativeName>
        <fullName>CAAX farnesyltransferase subunit alpha</fullName>
    </alternativeName>
    <alternativeName>
        <fullName>FTase-alpha</fullName>
    </alternativeName>
    <alternativeName>
        <fullName>Ras proteins prenyltransferase subunit alpha</fullName>
    </alternativeName>
    <alternativeName>
        <fullName>Type I protein geranyl-geranyltransferase subunit alpha</fullName>
        <shortName>GGTase-I-alpha</shortName>
    </alternativeName>
</protein>
<evidence type="ECO:0000250" key="1">
    <source>
        <dbReference type="UniProtKB" id="P29703"/>
    </source>
</evidence>
<evidence type="ECO:0000269" key="2">
    <source>
    </source>
</evidence>
<evidence type="ECO:0000305" key="3"/>
<gene>
    <name type="primary">FTA</name>
</gene>
<name>FNTA_PEA</name>
<proteinExistence type="evidence at protein level"/>